<comment type="function">
    <text evidence="1">Catalyzes the pyruvoyl-dependent decarboxylation of aspartate to produce beta-alanine.</text>
</comment>
<comment type="catalytic activity">
    <reaction evidence="1">
        <text>L-aspartate + H(+) = beta-alanine + CO2</text>
        <dbReference type="Rhea" id="RHEA:19497"/>
        <dbReference type="ChEBI" id="CHEBI:15378"/>
        <dbReference type="ChEBI" id="CHEBI:16526"/>
        <dbReference type="ChEBI" id="CHEBI:29991"/>
        <dbReference type="ChEBI" id="CHEBI:57966"/>
        <dbReference type="EC" id="4.1.1.11"/>
    </reaction>
</comment>
<comment type="cofactor">
    <cofactor evidence="1">
        <name>pyruvate</name>
        <dbReference type="ChEBI" id="CHEBI:15361"/>
    </cofactor>
    <text evidence="1">Binds 1 pyruvoyl group covalently per subunit.</text>
</comment>
<comment type="pathway">
    <text evidence="1">Cofactor biosynthesis; (R)-pantothenate biosynthesis; beta-alanine from L-aspartate: step 1/1.</text>
</comment>
<comment type="subunit">
    <text evidence="1">Heterooctamer of four alpha and four beta subunits.</text>
</comment>
<comment type="subcellular location">
    <subcellularLocation>
        <location evidence="1">Cytoplasm</location>
    </subcellularLocation>
</comment>
<comment type="PTM">
    <text evidence="1">Is synthesized initially as an inactive proenzyme, which is activated by self-cleavage at a specific serine bond to produce a beta-subunit with a hydroxyl group at its C-terminus and an alpha-subunit with a pyruvoyl group at its N-terminus.</text>
</comment>
<comment type="similarity">
    <text evidence="1">Belongs to the PanD family.</text>
</comment>
<dbReference type="EC" id="4.1.1.11" evidence="1"/>
<dbReference type="EMBL" id="CP000857">
    <property type="protein sequence ID" value="ACN44384.1"/>
    <property type="molecule type" value="Genomic_DNA"/>
</dbReference>
<dbReference type="RefSeq" id="WP_000621526.1">
    <property type="nucleotide sequence ID" value="NC_012125.1"/>
</dbReference>
<dbReference type="SMR" id="C0Q5P2"/>
<dbReference type="GeneID" id="89550440"/>
<dbReference type="KEGG" id="sei:SPC_0194"/>
<dbReference type="HOGENOM" id="CLU_115305_2_1_6"/>
<dbReference type="UniPathway" id="UPA00028">
    <property type="reaction ID" value="UER00002"/>
</dbReference>
<dbReference type="Proteomes" id="UP000001599">
    <property type="component" value="Chromosome"/>
</dbReference>
<dbReference type="GO" id="GO:0005829">
    <property type="term" value="C:cytosol"/>
    <property type="evidence" value="ECO:0007669"/>
    <property type="project" value="TreeGrafter"/>
</dbReference>
<dbReference type="GO" id="GO:0004068">
    <property type="term" value="F:aspartate 1-decarboxylase activity"/>
    <property type="evidence" value="ECO:0007669"/>
    <property type="project" value="UniProtKB-UniRule"/>
</dbReference>
<dbReference type="GO" id="GO:0006523">
    <property type="term" value="P:alanine biosynthetic process"/>
    <property type="evidence" value="ECO:0007669"/>
    <property type="project" value="InterPro"/>
</dbReference>
<dbReference type="GO" id="GO:0015940">
    <property type="term" value="P:pantothenate biosynthetic process"/>
    <property type="evidence" value="ECO:0007669"/>
    <property type="project" value="UniProtKB-UniRule"/>
</dbReference>
<dbReference type="CDD" id="cd06919">
    <property type="entry name" value="Asp_decarbox"/>
    <property type="match status" value="1"/>
</dbReference>
<dbReference type="FunFam" id="2.40.40.20:FF:000004">
    <property type="entry name" value="Aspartate 1-decarboxylase"/>
    <property type="match status" value="1"/>
</dbReference>
<dbReference type="Gene3D" id="2.40.40.20">
    <property type="match status" value="1"/>
</dbReference>
<dbReference type="HAMAP" id="MF_00446">
    <property type="entry name" value="PanD"/>
    <property type="match status" value="1"/>
</dbReference>
<dbReference type="InterPro" id="IPR009010">
    <property type="entry name" value="Asp_de-COase-like_dom_sf"/>
</dbReference>
<dbReference type="InterPro" id="IPR003190">
    <property type="entry name" value="Asp_decarbox"/>
</dbReference>
<dbReference type="NCBIfam" id="TIGR00223">
    <property type="entry name" value="panD"/>
    <property type="match status" value="1"/>
</dbReference>
<dbReference type="PANTHER" id="PTHR21012">
    <property type="entry name" value="ASPARTATE 1-DECARBOXYLASE"/>
    <property type="match status" value="1"/>
</dbReference>
<dbReference type="PANTHER" id="PTHR21012:SF0">
    <property type="entry name" value="ASPARTATE 1-DECARBOXYLASE"/>
    <property type="match status" value="1"/>
</dbReference>
<dbReference type="Pfam" id="PF02261">
    <property type="entry name" value="Asp_decarbox"/>
    <property type="match status" value="1"/>
</dbReference>
<dbReference type="PIRSF" id="PIRSF006246">
    <property type="entry name" value="Asp_decarbox"/>
    <property type="match status" value="1"/>
</dbReference>
<dbReference type="SUPFAM" id="SSF50692">
    <property type="entry name" value="ADC-like"/>
    <property type="match status" value="1"/>
</dbReference>
<proteinExistence type="inferred from homology"/>
<protein>
    <recommendedName>
        <fullName evidence="1">Aspartate 1-decarboxylase</fullName>
        <ecNumber evidence="1">4.1.1.11</ecNumber>
    </recommendedName>
    <alternativeName>
        <fullName evidence="1">Aspartate alpha-decarboxylase</fullName>
    </alternativeName>
    <component>
        <recommendedName>
            <fullName evidence="1">Aspartate 1-decarboxylase beta chain</fullName>
        </recommendedName>
    </component>
    <component>
        <recommendedName>
            <fullName evidence="1">Aspartate 1-decarboxylase alpha chain</fullName>
        </recommendedName>
    </component>
</protein>
<evidence type="ECO:0000255" key="1">
    <source>
        <dbReference type="HAMAP-Rule" id="MF_00446"/>
    </source>
</evidence>
<organism>
    <name type="scientific">Salmonella paratyphi C (strain RKS4594)</name>
    <dbReference type="NCBI Taxonomy" id="476213"/>
    <lineage>
        <taxon>Bacteria</taxon>
        <taxon>Pseudomonadati</taxon>
        <taxon>Pseudomonadota</taxon>
        <taxon>Gammaproteobacteria</taxon>
        <taxon>Enterobacterales</taxon>
        <taxon>Enterobacteriaceae</taxon>
        <taxon>Salmonella</taxon>
    </lineage>
</organism>
<name>PAND_SALPC</name>
<accession>C0Q5P2</accession>
<feature type="chain" id="PRO_1000135228" description="Aspartate 1-decarboxylase beta chain" evidence="1">
    <location>
        <begin position="1"/>
        <end position="24"/>
    </location>
</feature>
<feature type="chain" id="PRO_1000135229" description="Aspartate 1-decarboxylase alpha chain" evidence="1">
    <location>
        <begin position="25"/>
        <end position="126"/>
    </location>
</feature>
<feature type="active site" description="Schiff-base intermediate with substrate; via pyruvic acid" evidence="1">
    <location>
        <position position="25"/>
    </location>
</feature>
<feature type="active site" description="Proton donor" evidence="1">
    <location>
        <position position="58"/>
    </location>
</feature>
<feature type="binding site" evidence="1">
    <location>
        <position position="57"/>
    </location>
    <ligand>
        <name>substrate</name>
    </ligand>
</feature>
<feature type="binding site" evidence="1">
    <location>
        <begin position="73"/>
        <end position="75"/>
    </location>
    <ligand>
        <name>substrate</name>
    </ligand>
</feature>
<feature type="modified residue" description="Pyruvic acid (Ser)" evidence="1">
    <location>
        <position position="25"/>
    </location>
</feature>
<reference key="1">
    <citation type="journal article" date="2009" name="PLoS ONE">
        <title>Salmonella paratyphi C: genetic divergence from Salmonella choleraesuis and pathogenic convergence with Salmonella typhi.</title>
        <authorList>
            <person name="Liu W.-Q."/>
            <person name="Feng Y."/>
            <person name="Wang Y."/>
            <person name="Zou Q.-H."/>
            <person name="Chen F."/>
            <person name="Guo J.-T."/>
            <person name="Peng Y.-H."/>
            <person name="Jin Y."/>
            <person name="Li Y.-G."/>
            <person name="Hu S.-N."/>
            <person name="Johnston R.N."/>
            <person name="Liu G.-R."/>
            <person name="Liu S.-L."/>
        </authorList>
    </citation>
    <scope>NUCLEOTIDE SEQUENCE [LARGE SCALE GENOMIC DNA]</scope>
    <source>
        <strain>RKS4594</strain>
    </source>
</reference>
<keyword id="KW-0068">Autocatalytic cleavage</keyword>
<keyword id="KW-0963">Cytoplasm</keyword>
<keyword id="KW-0210">Decarboxylase</keyword>
<keyword id="KW-0456">Lyase</keyword>
<keyword id="KW-0566">Pantothenate biosynthesis</keyword>
<keyword id="KW-0670">Pyruvate</keyword>
<keyword id="KW-0704">Schiff base</keyword>
<keyword id="KW-0865">Zymogen</keyword>
<gene>
    <name evidence="1" type="primary">panD</name>
    <name type="ordered locus">SPC_0194</name>
</gene>
<sequence>MIRTMLQGKLHRVKVTQADLHYEGSCAIDQDFLDASGILENEAIDIWNVTNGKRFSTYAIAAERGSRIISVNGAAAHCAEVGDIVIIASFVTMSDEEARTWRPKVAYFEGDNEMKRTAKAIPVQVA</sequence>